<protein>
    <recommendedName>
        <fullName evidence="1">4-diphosphocytidyl-2-C-methyl-D-erythritol kinase</fullName>
        <shortName evidence="1">CMK</shortName>
        <ecNumber evidence="1">2.7.1.148</ecNumber>
    </recommendedName>
    <alternativeName>
        <fullName evidence="1">4-(cytidine-5'-diphospho)-2-C-methyl-D-erythritol kinase</fullName>
    </alternativeName>
</protein>
<sequence>MRITARAWGKINLHLGVGPAREDGYHELVTVFQTIDLAETITLTTLEDELVEEGSVVRQLTVTGPRGVPTTPDNLAWRAVDALVGRRREHDRTPLPAVELHIDKGIPVAGGMAGGSADAAAALRAVDAWIGPFGEETLLEVAAELGSDVPFCLLGGTKLGTGRGEQLVDMLSRGTYHWALVVSPKGLSTPEVFAKFDEMSLPSSMDVTPMSQALLDGSAGALAEVLENDLAPAALSLRPDLRKTQLAGLRAGALATMVSGSGPTIALLCDDAQSARDVADALMDEGVGLSVHPATSPVPGPAKNRGAHIVSIESE</sequence>
<organism>
    <name type="scientific">Corynebacterium efficiens (strain DSM 44549 / YS-314 / AJ 12310 / JCM 11189 / NBRC 100395)</name>
    <dbReference type="NCBI Taxonomy" id="196164"/>
    <lineage>
        <taxon>Bacteria</taxon>
        <taxon>Bacillati</taxon>
        <taxon>Actinomycetota</taxon>
        <taxon>Actinomycetes</taxon>
        <taxon>Mycobacteriales</taxon>
        <taxon>Corynebacteriaceae</taxon>
        <taxon>Corynebacterium</taxon>
    </lineage>
</organism>
<name>ISPE_COREF</name>
<comment type="function">
    <text evidence="1">Catalyzes the phosphorylation of the position 2 hydroxy group of 4-diphosphocytidyl-2C-methyl-D-erythritol.</text>
</comment>
<comment type="catalytic activity">
    <reaction evidence="1">
        <text>4-CDP-2-C-methyl-D-erythritol + ATP = 4-CDP-2-C-methyl-D-erythritol 2-phosphate + ADP + H(+)</text>
        <dbReference type="Rhea" id="RHEA:18437"/>
        <dbReference type="ChEBI" id="CHEBI:15378"/>
        <dbReference type="ChEBI" id="CHEBI:30616"/>
        <dbReference type="ChEBI" id="CHEBI:57823"/>
        <dbReference type="ChEBI" id="CHEBI:57919"/>
        <dbReference type="ChEBI" id="CHEBI:456216"/>
        <dbReference type="EC" id="2.7.1.148"/>
    </reaction>
</comment>
<comment type="pathway">
    <text evidence="1">Isoprenoid biosynthesis; isopentenyl diphosphate biosynthesis via DXP pathway; isopentenyl diphosphate from 1-deoxy-D-xylulose 5-phosphate: step 3/6.</text>
</comment>
<comment type="similarity">
    <text evidence="1">Belongs to the GHMP kinase family. IspE subfamily.</text>
</comment>
<reference key="1">
    <citation type="journal article" date="2003" name="Genome Res.">
        <title>Comparative complete genome sequence analysis of the amino acid replacements responsible for the thermostability of Corynebacterium efficiens.</title>
        <authorList>
            <person name="Nishio Y."/>
            <person name="Nakamura Y."/>
            <person name="Kawarabayasi Y."/>
            <person name="Usuda Y."/>
            <person name="Kimura E."/>
            <person name="Sugimoto S."/>
            <person name="Matsui K."/>
            <person name="Yamagishi A."/>
            <person name="Kikuchi H."/>
            <person name="Ikeo K."/>
            <person name="Gojobori T."/>
        </authorList>
    </citation>
    <scope>NUCLEOTIDE SEQUENCE [LARGE SCALE GENOMIC DNA]</scope>
    <source>
        <strain>DSM 44549 / YS-314 / AJ 12310 / JCM 11189 / NBRC 100395</strain>
    </source>
</reference>
<dbReference type="EC" id="2.7.1.148" evidence="1"/>
<dbReference type="EMBL" id="BA000035">
    <property type="protein sequence ID" value="BAC17783.1"/>
    <property type="molecule type" value="Genomic_DNA"/>
</dbReference>
<dbReference type="RefSeq" id="WP_006770062.1">
    <property type="nucleotide sequence ID" value="NC_004369.1"/>
</dbReference>
<dbReference type="SMR" id="Q8FQZ4"/>
<dbReference type="STRING" id="196164.gene:10741379"/>
<dbReference type="KEGG" id="cef:CE0973"/>
<dbReference type="eggNOG" id="COG1947">
    <property type="taxonomic scope" value="Bacteria"/>
</dbReference>
<dbReference type="HOGENOM" id="CLU_053057_1_1_11"/>
<dbReference type="OrthoDB" id="3173073at2"/>
<dbReference type="UniPathway" id="UPA00056">
    <property type="reaction ID" value="UER00094"/>
</dbReference>
<dbReference type="Proteomes" id="UP000001409">
    <property type="component" value="Chromosome"/>
</dbReference>
<dbReference type="GO" id="GO:0050515">
    <property type="term" value="F:4-(cytidine 5'-diphospho)-2-C-methyl-D-erythritol kinase activity"/>
    <property type="evidence" value="ECO:0007669"/>
    <property type="project" value="UniProtKB-UniRule"/>
</dbReference>
<dbReference type="GO" id="GO:0005524">
    <property type="term" value="F:ATP binding"/>
    <property type="evidence" value="ECO:0007669"/>
    <property type="project" value="UniProtKB-UniRule"/>
</dbReference>
<dbReference type="GO" id="GO:0019288">
    <property type="term" value="P:isopentenyl diphosphate biosynthetic process, methylerythritol 4-phosphate pathway"/>
    <property type="evidence" value="ECO:0007669"/>
    <property type="project" value="UniProtKB-UniRule"/>
</dbReference>
<dbReference type="GO" id="GO:0016114">
    <property type="term" value="P:terpenoid biosynthetic process"/>
    <property type="evidence" value="ECO:0007669"/>
    <property type="project" value="InterPro"/>
</dbReference>
<dbReference type="Gene3D" id="3.30.230.10">
    <property type="match status" value="1"/>
</dbReference>
<dbReference type="Gene3D" id="3.30.70.890">
    <property type="entry name" value="GHMP kinase, C-terminal domain"/>
    <property type="match status" value="1"/>
</dbReference>
<dbReference type="HAMAP" id="MF_00061">
    <property type="entry name" value="IspE"/>
    <property type="match status" value="1"/>
</dbReference>
<dbReference type="InterPro" id="IPR013750">
    <property type="entry name" value="GHMP_kinase_C_dom"/>
</dbReference>
<dbReference type="InterPro" id="IPR036554">
    <property type="entry name" value="GHMP_kinase_C_sf"/>
</dbReference>
<dbReference type="InterPro" id="IPR006204">
    <property type="entry name" value="GHMP_kinase_N_dom"/>
</dbReference>
<dbReference type="InterPro" id="IPR004424">
    <property type="entry name" value="IspE"/>
</dbReference>
<dbReference type="InterPro" id="IPR020568">
    <property type="entry name" value="Ribosomal_Su5_D2-typ_SF"/>
</dbReference>
<dbReference type="InterPro" id="IPR014721">
    <property type="entry name" value="Ribsml_uS5_D2-typ_fold_subgr"/>
</dbReference>
<dbReference type="NCBIfam" id="TIGR00154">
    <property type="entry name" value="ispE"/>
    <property type="match status" value="1"/>
</dbReference>
<dbReference type="NCBIfam" id="NF002870">
    <property type="entry name" value="PRK03188.1"/>
    <property type="match status" value="1"/>
</dbReference>
<dbReference type="PANTHER" id="PTHR43527">
    <property type="entry name" value="4-DIPHOSPHOCYTIDYL-2-C-METHYL-D-ERYTHRITOL KINASE, CHLOROPLASTIC"/>
    <property type="match status" value="1"/>
</dbReference>
<dbReference type="PANTHER" id="PTHR43527:SF2">
    <property type="entry name" value="4-DIPHOSPHOCYTIDYL-2-C-METHYL-D-ERYTHRITOL KINASE, CHLOROPLASTIC"/>
    <property type="match status" value="1"/>
</dbReference>
<dbReference type="Pfam" id="PF08544">
    <property type="entry name" value="GHMP_kinases_C"/>
    <property type="match status" value="1"/>
</dbReference>
<dbReference type="Pfam" id="PF00288">
    <property type="entry name" value="GHMP_kinases_N"/>
    <property type="match status" value="1"/>
</dbReference>
<dbReference type="PIRSF" id="PIRSF010376">
    <property type="entry name" value="IspE"/>
    <property type="match status" value="1"/>
</dbReference>
<dbReference type="SUPFAM" id="SSF55060">
    <property type="entry name" value="GHMP Kinase, C-terminal domain"/>
    <property type="match status" value="1"/>
</dbReference>
<dbReference type="SUPFAM" id="SSF54211">
    <property type="entry name" value="Ribosomal protein S5 domain 2-like"/>
    <property type="match status" value="1"/>
</dbReference>
<feature type="chain" id="PRO_0000189211" description="4-diphosphocytidyl-2-C-methyl-D-erythritol kinase">
    <location>
        <begin position="1"/>
        <end position="315"/>
    </location>
</feature>
<feature type="region of interest" description="Disordered" evidence="2">
    <location>
        <begin position="292"/>
        <end position="315"/>
    </location>
</feature>
<feature type="active site" evidence="1">
    <location>
        <position position="10"/>
    </location>
</feature>
<feature type="active site" evidence="1">
    <location>
        <position position="148"/>
    </location>
</feature>
<feature type="binding site" evidence="1">
    <location>
        <begin position="107"/>
        <end position="117"/>
    </location>
    <ligand>
        <name>ATP</name>
        <dbReference type="ChEBI" id="CHEBI:30616"/>
    </ligand>
</feature>
<keyword id="KW-0067">ATP-binding</keyword>
<keyword id="KW-0414">Isoprene biosynthesis</keyword>
<keyword id="KW-0418">Kinase</keyword>
<keyword id="KW-0547">Nucleotide-binding</keyword>
<keyword id="KW-1185">Reference proteome</keyword>
<keyword id="KW-0808">Transferase</keyword>
<accession>Q8FQZ4</accession>
<gene>
    <name evidence="1" type="primary">ispE</name>
    <name type="ordered locus">CE0973</name>
</gene>
<evidence type="ECO:0000255" key="1">
    <source>
        <dbReference type="HAMAP-Rule" id="MF_00061"/>
    </source>
</evidence>
<evidence type="ECO:0000256" key="2">
    <source>
        <dbReference type="SAM" id="MobiDB-lite"/>
    </source>
</evidence>
<proteinExistence type="inferred from homology"/>